<proteinExistence type="predicted"/>
<keyword id="KW-1185">Reference proteome</keyword>
<dbReference type="EMBL" id="AF233324">
    <property type="protein sequence ID" value="AAF33444.1"/>
    <property type="molecule type" value="Genomic_DNA"/>
</dbReference>
<dbReference type="EMBL" id="AE006468">
    <property type="protein sequence ID" value="AAL22792.1"/>
    <property type="molecule type" value="Genomic_DNA"/>
</dbReference>
<dbReference type="EMBL" id="U92525">
    <property type="protein sequence ID" value="AAC45777.1"/>
    <property type="molecule type" value="Genomic_DNA"/>
</dbReference>
<dbReference type="RefSeq" id="NP_462833.1">
    <property type="nucleotide sequence ID" value="NC_003197.2"/>
</dbReference>
<dbReference type="RefSeq" id="WP_000812765.1">
    <property type="nucleotide sequence ID" value="NC_003197.2"/>
</dbReference>
<dbReference type="SMR" id="P55886"/>
<dbReference type="STRING" id="99287.STM3948"/>
<dbReference type="PaxDb" id="99287-STM3948"/>
<dbReference type="DNASU" id="1255474"/>
<dbReference type="GeneID" id="1255474"/>
<dbReference type="KEGG" id="stm:STM3948"/>
<dbReference type="PATRIC" id="fig|99287.12.peg.4166"/>
<dbReference type="HOGENOM" id="CLU_073320_0_0_6"/>
<dbReference type="OMA" id="PVGRWVS"/>
<dbReference type="PhylomeDB" id="P55886"/>
<dbReference type="BioCyc" id="SENT99287:STM3948-MONOMER"/>
<dbReference type="Proteomes" id="UP000001014">
    <property type="component" value="Chromosome"/>
</dbReference>
<dbReference type="Gene3D" id="3.30.450.40">
    <property type="match status" value="1"/>
</dbReference>
<dbReference type="InterPro" id="IPR007435">
    <property type="entry name" value="DUF484"/>
</dbReference>
<dbReference type="InterPro" id="IPR029016">
    <property type="entry name" value="GAF-like_dom_sf"/>
</dbReference>
<dbReference type="NCBIfam" id="NF008203">
    <property type="entry name" value="PRK10963.1"/>
    <property type="match status" value="1"/>
</dbReference>
<dbReference type="PANTHER" id="PTHR38765">
    <property type="entry name" value="DUF484 DOMAIN-CONTAINING PROTEIN"/>
    <property type="match status" value="1"/>
</dbReference>
<dbReference type="PANTHER" id="PTHR38765:SF1">
    <property type="entry name" value="DUF484 DOMAIN-CONTAINING PROTEIN"/>
    <property type="match status" value="1"/>
</dbReference>
<dbReference type="Pfam" id="PF04340">
    <property type="entry name" value="DUF484"/>
    <property type="match status" value="1"/>
</dbReference>
<name>YIGA_SALTY</name>
<organism>
    <name type="scientific">Salmonella typhimurium (strain LT2 / SGSC1412 / ATCC 700720)</name>
    <dbReference type="NCBI Taxonomy" id="99287"/>
    <lineage>
        <taxon>Bacteria</taxon>
        <taxon>Pseudomonadati</taxon>
        <taxon>Pseudomonadota</taxon>
        <taxon>Gammaproteobacteria</taxon>
        <taxon>Enterobacterales</taxon>
        <taxon>Enterobacteriaceae</taxon>
        <taxon>Salmonella</taxon>
    </lineage>
</organism>
<gene>
    <name type="primary">yigA</name>
    <name type="ordered locus">STM3948</name>
    <name type="ORF">STMD1.42</name>
</gene>
<reference key="1">
    <citation type="journal article" date="2001" name="Nature">
        <title>Complete genome sequence of Salmonella enterica serovar Typhimurium LT2.</title>
        <authorList>
            <person name="McClelland M."/>
            <person name="Sanderson K.E."/>
            <person name="Spieth J."/>
            <person name="Clifton S.W."/>
            <person name="Latreille P."/>
            <person name="Courtney L."/>
            <person name="Porwollik S."/>
            <person name="Ali J."/>
            <person name="Dante M."/>
            <person name="Du F."/>
            <person name="Hou S."/>
            <person name="Layman D."/>
            <person name="Leonard S."/>
            <person name="Nguyen C."/>
            <person name="Scott K."/>
            <person name="Holmes A."/>
            <person name="Grewal N."/>
            <person name="Mulvaney E."/>
            <person name="Ryan E."/>
            <person name="Sun H."/>
            <person name="Florea L."/>
            <person name="Miller W."/>
            <person name="Stoneking T."/>
            <person name="Nhan M."/>
            <person name="Waterston R."/>
            <person name="Wilson R.K."/>
        </authorList>
    </citation>
    <scope>NUCLEOTIDE SEQUENCE [LARGE SCALE GENOMIC DNA]</scope>
    <source>
        <strain>LT2 / SGSC1412 / ATCC 700720</strain>
    </source>
</reference>
<reference key="2">
    <citation type="submission" date="1997-04" db="EMBL/GenBank/DDBJ databases">
        <authorList>
            <person name="Hayes F."/>
        </authorList>
    </citation>
    <scope>NUCLEOTIDE SEQUENCE [GENOMIC DNA] OF 99-235</scope>
    <source>
        <strain>LT2</strain>
    </source>
</reference>
<sequence>MKQPEEELQETLTELDDRAVVDYLRHHPEFFIRNAHAVEAMRVPHPVRGTVSLVEWHMARARNHINVLEENMTLLMEQAHANESLFYRLLHLQSRLVAADSLDEMLVRFHRWARDLGLAGATLRLFPDRWRLGAPSRYTHLALNRQAFEPLRIQRLGQSQHYLGPLNGPELLVVLPEAKAVGSVAMSMMGSDGGLGVILFSSRDPHHYQPGQGTQLLQEIALMLPELLERWIKRV</sequence>
<accession>P55886</accession>
<accession>Q9L6P5</accession>
<evidence type="ECO:0000305" key="1"/>
<feature type="chain" id="PRO_0000169649" description="Uncharacterized protein YigA">
    <location>
        <begin position="1"/>
        <end position="235"/>
    </location>
</feature>
<feature type="sequence conflict" description="In Ref. 2; AAC45777." evidence="1" ref="2">
    <original>P</original>
    <variation>A</variation>
    <location>
        <position position="135"/>
    </location>
</feature>
<feature type="sequence conflict" description="In Ref. 2; AAC45777." evidence="1" ref="2">
    <original>R</original>
    <variation>H</variation>
    <location>
        <position position="145"/>
    </location>
</feature>
<feature type="sequence conflict" description="In Ref. 2; AAC45777." evidence="1" ref="2">
    <original>GLG</original>
    <variation>AR</variation>
    <location>
        <begin position="194"/>
        <end position="196"/>
    </location>
</feature>
<protein>
    <recommendedName>
        <fullName>Uncharacterized protein YigA</fullName>
    </recommendedName>
</protein>